<feature type="chain" id="PRO_0000436729" description="Probable efflux pump gsfJ">
    <location>
        <begin position="1"/>
        <end position="554"/>
    </location>
</feature>
<feature type="transmembrane region" description="Helical" evidence="1">
    <location>
        <begin position="54"/>
        <end position="74"/>
    </location>
</feature>
<feature type="transmembrane region" description="Helical" evidence="1">
    <location>
        <begin position="93"/>
        <end position="115"/>
    </location>
</feature>
<feature type="transmembrane region" description="Helical" evidence="1">
    <location>
        <begin position="120"/>
        <end position="140"/>
    </location>
</feature>
<feature type="transmembrane region" description="Helical" evidence="1">
    <location>
        <begin position="152"/>
        <end position="172"/>
    </location>
</feature>
<feature type="transmembrane region" description="Helical" evidence="1">
    <location>
        <begin position="181"/>
        <end position="201"/>
    </location>
</feature>
<feature type="transmembrane region" description="Helical" evidence="1">
    <location>
        <begin position="206"/>
        <end position="226"/>
    </location>
</feature>
<feature type="transmembrane region" description="Helical" evidence="1">
    <location>
        <begin position="248"/>
        <end position="268"/>
    </location>
</feature>
<feature type="transmembrane region" description="Helical" evidence="1">
    <location>
        <begin position="279"/>
        <end position="299"/>
    </location>
</feature>
<feature type="transmembrane region" description="Helical" evidence="1">
    <location>
        <begin position="321"/>
        <end position="341"/>
    </location>
</feature>
<feature type="transmembrane region" description="Helical" evidence="1">
    <location>
        <begin position="349"/>
        <end position="369"/>
    </location>
</feature>
<feature type="transmembrane region" description="Helical" evidence="1">
    <location>
        <begin position="379"/>
        <end position="399"/>
    </location>
</feature>
<feature type="transmembrane region" description="Helical" evidence="1">
    <location>
        <begin position="410"/>
        <end position="430"/>
    </location>
</feature>
<feature type="transmembrane region" description="Helical" evidence="1">
    <location>
        <begin position="447"/>
        <end position="467"/>
    </location>
</feature>
<feature type="transmembrane region" description="Helical" evidence="1">
    <location>
        <begin position="518"/>
        <end position="538"/>
    </location>
</feature>
<organism>
    <name type="scientific">Penicillium aethiopicum</name>
    <dbReference type="NCBI Taxonomy" id="36650"/>
    <lineage>
        <taxon>Eukaryota</taxon>
        <taxon>Fungi</taxon>
        <taxon>Dikarya</taxon>
        <taxon>Ascomycota</taxon>
        <taxon>Pezizomycotina</taxon>
        <taxon>Eurotiomycetes</taxon>
        <taxon>Eurotiomycetidae</taxon>
        <taxon>Eurotiales</taxon>
        <taxon>Aspergillaceae</taxon>
        <taxon>Penicillium</taxon>
    </lineage>
</organism>
<sequence>MDKQNTDSEKRATAEAPPQSLCTLVSSSEQGGMDITNHNAKAGAADEYPHGVRLAAVVFSLMLGMFLVALDNTILGTAIPKITDEFHDLNKVSWYGSAYLMTFGCGFQSTWGKFYKYFPIKVWFLVAVFIFEVGSLICAVAQNPTTLIVGRAIAGFGGSGVGVGIFTIIGFAAPPENRPQLLGFTGATYGIAAVLGPLIGGAFTDKCFYINLPIGGVAAGTIFLLFKPPTSASPAKATPKEKFLQMDLVGATLMMGLIVSYILALQYGGQTHSWKSSEVIGLLVGFFLFVLAFVTWEIYQKERAMIVPRLFMRRYISVGSIYMFFFSGAYFIILYYLPIYFQSVYNSSPIGSGVKMLALIIPLTLAAIVQGWALSKIRIVPLFWIIGGALGTVGCGLFYTFDTETSVGKWVGYQIIVGFSTGWTFQIAMSNAQVHAPPEDMSQATAIVNFFMTVGGAFFISAAQCAFSNQLIKTITKNLPELDPTVAISTGATQIREAFTASQVPIVVDAYMVGLKAVFAITIAAFGVATVIGFFGSWKKLLADELEKATGGVA</sequence>
<protein>
    <recommendedName>
        <fullName evidence="6">Probable efflux pump gsfJ</fullName>
    </recommendedName>
    <alternativeName>
        <fullName evidence="6">Griseofulvin synthesis protein J</fullName>
    </alternativeName>
</protein>
<name>GSFJ_PENAE</name>
<gene>
    <name evidence="6" type="primary">gsfJ</name>
</gene>
<accession>D7PI13</accession>
<keyword id="KW-0472">Membrane</keyword>
<keyword id="KW-0812">Transmembrane</keyword>
<keyword id="KW-1133">Transmembrane helix</keyword>
<keyword id="KW-0813">Transport</keyword>
<evidence type="ECO:0000255" key="1"/>
<evidence type="ECO:0000269" key="2">
    <source>
    </source>
</evidence>
<evidence type="ECO:0000269" key="3">
    <source>
    </source>
</evidence>
<evidence type="ECO:0000269" key="4">
    <source>
    </source>
</evidence>
<evidence type="ECO:0000269" key="5">
    <source>
    </source>
</evidence>
<evidence type="ECO:0000303" key="6">
    <source>
    </source>
</evidence>
<evidence type="ECO:0000305" key="7"/>
<dbReference type="EMBL" id="GU574478">
    <property type="protein sequence ID" value="ADI24949.1"/>
    <property type="molecule type" value="Genomic_DNA"/>
</dbReference>
<dbReference type="SMR" id="D7PI13"/>
<dbReference type="GO" id="GO:0005886">
    <property type="term" value="C:plasma membrane"/>
    <property type="evidence" value="ECO:0007669"/>
    <property type="project" value="TreeGrafter"/>
</dbReference>
<dbReference type="GO" id="GO:0022857">
    <property type="term" value="F:transmembrane transporter activity"/>
    <property type="evidence" value="ECO:0007669"/>
    <property type="project" value="InterPro"/>
</dbReference>
<dbReference type="CDD" id="cd17502">
    <property type="entry name" value="MFS_Azr1_MDR_like"/>
    <property type="match status" value="1"/>
</dbReference>
<dbReference type="Gene3D" id="1.20.1250.20">
    <property type="entry name" value="MFS general substrate transporter like domains"/>
    <property type="match status" value="1"/>
</dbReference>
<dbReference type="InterPro" id="IPR011701">
    <property type="entry name" value="MFS"/>
</dbReference>
<dbReference type="InterPro" id="IPR020846">
    <property type="entry name" value="MFS_dom"/>
</dbReference>
<dbReference type="InterPro" id="IPR036259">
    <property type="entry name" value="MFS_trans_sf"/>
</dbReference>
<dbReference type="PANTHER" id="PTHR23501">
    <property type="entry name" value="MAJOR FACILITATOR SUPERFAMILY"/>
    <property type="match status" value="1"/>
</dbReference>
<dbReference type="PANTHER" id="PTHR23501:SF177">
    <property type="entry name" value="MAJOR FACILITATOR SUPERFAMILY (MFS) PROFILE DOMAIN-CONTAINING PROTEIN-RELATED"/>
    <property type="match status" value="1"/>
</dbReference>
<dbReference type="Pfam" id="PF07690">
    <property type="entry name" value="MFS_1"/>
    <property type="match status" value="1"/>
</dbReference>
<dbReference type="SUPFAM" id="SSF103473">
    <property type="entry name" value="MFS general substrate transporter"/>
    <property type="match status" value="2"/>
</dbReference>
<dbReference type="PROSITE" id="PS50850">
    <property type="entry name" value="MFS"/>
    <property type="match status" value="1"/>
</dbReference>
<comment type="function">
    <text evidence="3 4">Probable efflux pump; part of the gene cluster that mediates the biosynthesis of griseofulvin.</text>
</comment>
<comment type="subcellular location">
    <subcellularLocation>
        <location evidence="1">Membrane</location>
        <topology evidence="1">Multi-pass membrane protein</topology>
    </subcellularLocation>
</comment>
<comment type="biotechnology">
    <text evidence="2 5">Griseofulvin is a spirocyclic fungal natural product used in treatment of fungal dermatophytes (PubMed:13577889, PubMed:4583105).</text>
</comment>
<comment type="similarity">
    <text evidence="7">Belongs to the major facilitator superfamily.</text>
</comment>
<reference key="1">
    <citation type="journal article" date="2010" name="Chem. Biol.">
        <title>Identification of the viridicatumtoxin and griseofulvin gene clusters from Penicillium aethiopicum.</title>
        <authorList>
            <person name="Chooi Y.H."/>
            <person name="Cacho R."/>
            <person name="Tang Y."/>
        </authorList>
    </citation>
    <scope>NUCLEOTIDE SEQUENCE [GENOMIC DNA]</scope>
    <scope>FUNCTION</scope>
    <source>
        <strain>IBT 5753</strain>
    </source>
</reference>
<reference key="2">
    <citation type="journal article" date="1958" name="Nature">
        <title>Experimental ringworm in guinea pigs: oral treatment with griseofulvin.</title>
        <authorList>
            <person name="Gentles J.C."/>
        </authorList>
    </citation>
    <scope>BIOTECHNOLOGY</scope>
</reference>
<reference key="3">
    <citation type="journal article" date="1973" name="Nature">
        <title>Griseofulvin inhibits fungal mitosis.</title>
        <authorList>
            <person name="Gull K."/>
            <person name="Trinci A.P."/>
        </authorList>
    </citation>
    <scope>BIOTECHNOLOGY</scope>
</reference>
<reference key="4">
    <citation type="journal article" date="2013" name="ACS Chem. Biol.">
        <title>Complexity generation in fungal polyketide biosynthesis: a spirocycle-forming P450 in the concise pathway to the antifungal drug griseofulvin.</title>
        <authorList>
            <person name="Cacho R.A."/>
            <person name="Chooi Y.H."/>
            <person name="Zhou H."/>
            <person name="Tang Y."/>
        </authorList>
    </citation>
    <scope>FUNCTION</scope>
</reference>
<proteinExistence type="evidence at protein level"/>